<gene>
    <name evidence="1" type="primary">hemH</name>
</gene>
<reference key="1">
    <citation type="submission" date="2000-10" db="EMBL/GenBank/DDBJ databases">
        <title>Ferrochelatase encoding gene of Pseudomonas fluorescens ATCC 17400.</title>
        <authorList>
            <person name="Baysse C.V."/>
            <person name="Cornelis P.E."/>
        </authorList>
    </citation>
    <scope>NUCLEOTIDE SEQUENCE [GENOMIC DNA]</scope>
    <source>
        <strain>ATCC 17400 / DSM 50117 / ICPB 2656-18 / NBRC 15833 / NCIMB 10460 / Stanier C-18</strain>
    </source>
</reference>
<organism>
    <name type="scientific">Pseudomonas fluorescens biotype C</name>
    <dbReference type="NCBI Taxonomy" id="335"/>
    <lineage>
        <taxon>Bacteria</taxon>
        <taxon>Pseudomonadati</taxon>
        <taxon>Pseudomonadota</taxon>
        <taxon>Gammaproteobacteria</taxon>
        <taxon>Pseudomonadales</taxon>
        <taxon>Pseudomonadaceae</taxon>
        <taxon>Pseudomonas</taxon>
    </lineage>
</organism>
<comment type="function">
    <text evidence="1">Catalyzes the ferrous insertion into protoporphyrin IX.</text>
</comment>
<comment type="catalytic activity">
    <reaction evidence="1">
        <text>heme b + 2 H(+) = protoporphyrin IX + Fe(2+)</text>
        <dbReference type="Rhea" id="RHEA:22584"/>
        <dbReference type="ChEBI" id="CHEBI:15378"/>
        <dbReference type="ChEBI" id="CHEBI:29033"/>
        <dbReference type="ChEBI" id="CHEBI:57306"/>
        <dbReference type="ChEBI" id="CHEBI:60344"/>
        <dbReference type="EC" id="4.98.1.1"/>
    </reaction>
</comment>
<comment type="pathway">
    <text evidence="1">Porphyrin-containing compound metabolism; protoheme biosynthesis; protoheme from protoporphyrin-IX: step 1/1.</text>
</comment>
<comment type="subcellular location">
    <subcellularLocation>
        <location evidence="1">Cytoplasm</location>
    </subcellularLocation>
</comment>
<comment type="similarity">
    <text evidence="1 2">Belongs to the ferrochelatase family.</text>
</comment>
<protein>
    <recommendedName>
        <fullName evidence="1">Ferrochelatase</fullName>
        <ecNumber evidence="1">4.98.1.1</ecNumber>
    </recommendedName>
    <alternativeName>
        <fullName evidence="1">Heme synthase</fullName>
    </alternativeName>
    <alternativeName>
        <fullName evidence="1">Protoheme ferro-lyase</fullName>
    </alternativeName>
</protein>
<sequence length="340" mass="38036">MTDHALLLVNLGSPASTSVADVRSYLNQFLMDPYVIDLPWPVRRLLVSLILIKRPAQSAHAYASIWWDEGSPLVVLSRRLQQQMTAQWTQGPVELAMRYGEPSIESVLTRLAGQGISKVTLAPLYPQFADSTVTTVIEEARRVVRDKQLDLQFSILQPFYDQPEYLDALVASARPHLQQDYDHLLFSFHGLPERHLNKLNPGHSLEGSGDCCANASPEVRTTCYRGQCFSVARDFAARMGLPDDKWSVAFQSRLGRAKWIEPYTEARLEALAQQGVKKLLVMCPAFVADCIETLEEIGDRGLEQFREAGGEELVLVPCLNDDPQWAVALNTLCERAPVSL</sequence>
<name>HEMH_PSEFC</name>
<evidence type="ECO:0000255" key="1">
    <source>
        <dbReference type="HAMAP-Rule" id="MF_00323"/>
    </source>
</evidence>
<evidence type="ECO:0000305" key="2"/>
<feature type="chain" id="PRO_0000175184" description="Ferrochelatase">
    <location>
        <begin position="1"/>
        <end position="340"/>
    </location>
</feature>
<feature type="binding site" evidence="1">
    <location>
        <position position="189"/>
    </location>
    <ligand>
        <name>Fe cation</name>
        <dbReference type="ChEBI" id="CHEBI:24875"/>
    </ligand>
</feature>
<feature type="binding site" evidence="1">
    <location>
        <position position="292"/>
    </location>
    <ligand>
        <name>Fe cation</name>
        <dbReference type="ChEBI" id="CHEBI:24875"/>
    </ligand>
</feature>
<keyword id="KW-0963">Cytoplasm</keyword>
<keyword id="KW-0350">Heme biosynthesis</keyword>
<keyword id="KW-0408">Iron</keyword>
<keyword id="KW-0456">Lyase</keyword>
<keyword id="KW-0479">Metal-binding</keyword>
<keyword id="KW-0627">Porphyrin biosynthesis</keyword>
<accession>P57778</accession>
<proteinExistence type="inferred from homology"/>
<dbReference type="EC" id="4.98.1.1" evidence="1"/>
<dbReference type="EMBL" id="AF314196">
    <property type="protein sequence ID" value="AAG31804.1"/>
    <property type="molecule type" value="Genomic_DNA"/>
</dbReference>
<dbReference type="SMR" id="P57778"/>
<dbReference type="BRENDA" id="4.99.1.1">
    <property type="organism ID" value="5121"/>
</dbReference>
<dbReference type="UniPathway" id="UPA00252">
    <property type="reaction ID" value="UER00325"/>
</dbReference>
<dbReference type="GO" id="GO:0005737">
    <property type="term" value="C:cytoplasm"/>
    <property type="evidence" value="ECO:0007669"/>
    <property type="project" value="UniProtKB-SubCell"/>
</dbReference>
<dbReference type="GO" id="GO:0004325">
    <property type="term" value="F:ferrochelatase activity"/>
    <property type="evidence" value="ECO:0007669"/>
    <property type="project" value="UniProtKB-UniRule"/>
</dbReference>
<dbReference type="GO" id="GO:0046872">
    <property type="term" value="F:metal ion binding"/>
    <property type="evidence" value="ECO:0007669"/>
    <property type="project" value="UniProtKB-KW"/>
</dbReference>
<dbReference type="GO" id="GO:0006783">
    <property type="term" value="P:heme biosynthetic process"/>
    <property type="evidence" value="ECO:0007669"/>
    <property type="project" value="UniProtKB-UniRule"/>
</dbReference>
<dbReference type="CDD" id="cd00419">
    <property type="entry name" value="Ferrochelatase_C"/>
    <property type="match status" value="1"/>
</dbReference>
<dbReference type="CDD" id="cd03411">
    <property type="entry name" value="Ferrochelatase_N"/>
    <property type="match status" value="1"/>
</dbReference>
<dbReference type="Gene3D" id="3.40.50.1400">
    <property type="match status" value="2"/>
</dbReference>
<dbReference type="HAMAP" id="MF_00323">
    <property type="entry name" value="Ferrochelatase"/>
    <property type="match status" value="1"/>
</dbReference>
<dbReference type="InterPro" id="IPR001015">
    <property type="entry name" value="Ferrochelatase"/>
</dbReference>
<dbReference type="InterPro" id="IPR033644">
    <property type="entry name" value="Ferrochelatase_C"/>
</dbReference>
<dbReference type="InterPro" id="IPR033659">
    <property type="entry name" value="Ferrochelatase_N"/>
</dbReference>
<dbReference type="NCBIfam" id="TIGR00109">
    <property type="entry name" value="hemH"/>
    <property type="match status" value="1"/>
</dbReference>
<dbReference type="PANTHER" id="PTHR11108">
    <property type="entry name" value="FERROCHELATASE"/>
    <property type="match status" value="1"/>
</dbReference>
<dbReference type="PANTHER" id="PTHR11108:SF1">
    <property type="entry name" value="FERROCHELATASE, MITOCHONDRIAL"/>
    <property type="match status" value="1"/>
</dbReference>
<dbReference type="Pfam" id="PF00762">
    <property type="entry name" value="Ferrochelatase"/>
    <property type="match status" value="1"/>
</dbReference>
<dbReference type="SUPFAM" id="SSF53800">
    <property type="entry name" value="Chelatase"/>
    <property type="match status" value="1"/>
</dbReference>